<name>NCBP2_CAEBR</name>
<feature type="chain" id="PRO_0000385256" description="Nuclear cap-binding protein subunit 2">
    <location>
        <begin position="1"/>
        <end position="157"/>
    </location>
</feature>
<feature type="domain" description="RRM" evidence="2">
    <location>
        <begin position="37"/>
        <end position="115"/>
    </location>
</feature>
<feature type="binding site" evidence="1">
    <location>
        <position position="17"/>
    </location>
    <ligand>
        <name>mRNA</name>
        <dbReference type="ChEBI" id="CHEBI:33699"/>
    </ligand>
    <ligandPart>
        <name>mRNA cap</name>
    </ligandPart>
</feature>
<feature type="binding site" evidence="1">
    <location>
        <position position="40"/>
    </location>
    <ligand>
        <name>mRNA</name>
        <dbReference type="ChEBI" id="CHEBI:33699"/>
    </ligand>
    <ligandPart>
        <name>mRNA cap</name>
    </ligandPart>
</feature>
<feature type="binding site" evidence="1">
    <location>
        <begin position="109"/>
        <end position="113"/>
    </location>
    <ligand>
        <name>mRNA</name>
        <dbReference type="ChEBI" id="CHEBI:33699"/>
    </ligand>
    <ligandPart>
        <name>mRNA cap</name>
    </ligandPart>
</feature>
<feature type="binding site" evidence="1">
    <location>
        <begin position="120"/>
        <end position="124"/>
    </location>
    <ligand>
        <name>mRNA</name>
        <dbReference type="ChEBI" id="CHEBI:33699"/>
    </ligand>
    <ligandPart>
        <name>mRNA cap</name>
    </ligandPart>
</feature>
<feature type="binding site" evidence="1">
    <location>
        <begin position="130"/>
        <end position="131"/>
    </location>
    <ligand>
        <name>mRNA</name>
        <dbReference type="ChEBI" id="CHEBI:33699"/>
    </ligand>
    <ligandPart>
        <name>mRNA cap</name>
    </ligandPart>
</feature>
<evidence type="ECO:0000250" key="1"/>
<evidence type="ECO:0000255" key="2">
    <source>
        <dbReference type="PROSITE-ProRule" id="PRU00176"/>
    </source>
</evidence>
<evidence type="ECO:0000305" key="3"/>
<gene>
    <name type="primary">ncbp-2</name>
    <name type="synonym">cbp-20</name>
    <name type="ORF">CBG22194</name>
</gene>
<reference key="1">
    <citation type="journal article" date="2003" name="PLoS Biol.">
        <title>The genome sequence of Caenorhabditis briggsae: a platform for comparative genomics.</title>
        <authorList>
            <person name="Stein L.D."/>
            <person name="Bao Z."/>
            <person name="Blasiar D."/>
            <person name="Blumenthal T."/>
            <person name="Brent M.R."/>
            <person name="Chen N."/>
            <person name="Chinwalla A."/>
            <person name="Clarke L."/>
            <person name="Clee C."/>
            <person name="Coghlan A."/>
            <person name="Coulson A."/>
            <person name="D'Eustachio P."/>
            <person name="Fitch D.H.A."/>
            <person name="Fulton L.A."/>
            <person name="Fulton R.E."/>
            <person name="Griffiths-Jones S."/>
            <person name="Harris T.W."/>
            <person name="Hillier L.W."/>
            <person name="Kamath R."/>
            <person name="Kuwabara P.E."/>
            <person name="Mardis E.R."/>
            <person name="Marra M.A."/>
            <person name="Miner T.L."/>
            <person name="Minx P."/>
            <person name="Mullikin J.C."/>
            <person name="Plumb R.W."/>
            <person name="Rogers J."/>
            <person name="Schein J.E."/>
            <person name="Sohrmann M."/>
            <person name="Spieth J."/>
            <person name="Stajich J.E."/>
            <person name="Wei C."/>
            <person name="Willey D."/>
            <person name="Wilson R.K."/>
            <person name="Durbin R.M."/>
            <person name="Waterston R.H."/>
        </authorList>
    </citation>
    <scope>NUCLEOTIDE SEQUENCE [LARGE SCALE GENOMIC DNA]</scope>
    <source>
        <strain>AF16</strain>
    </source>
</reference>
<dbReference type="EMBL" id="HE601428">
    <property type="protein sequence ID" value="CAP38838.2"/>
    <property type="molecule type" value="Genomic_DNA"/>
</dbReference>
<dbReference type="SMR" id="A8Y1R8"/>
<dbReference type="FunCoup" id="A8Y1R8">
    <property type="interactions" value="2616"/>
</dbReference>
<dbReference type="STRING" id="6238.A8Y1R8"/>
<dbReference type="WormBase" id="CBG22194">
    <property type="protein sequence ID" value="CBP39786"/>
    <property type="gene ID" value="WBGene00040808"/>
    <property type="gene designation" value="Cbr-ncbp-2"/>
</dbReference>
<dbReference type="eggNOG" id="KOG0121">
    <property type="taxonomic scope" value="Eukaryota"/>
</dbReference>
<dbReference type="HOGENOM" id="CLU_070952_2_1_1"/>
<dbReference type="InParanoid" id="A8Y1R8"/>
<dbReference type="OMA" id="DIRRIIM"/>
<dbReference type="Proteomes" id="UP000008549">
    <property type="component" value="Unassembled WGS sequence"/>
</dbReference>
<dbReference type="GO" id="GO:0005846">
    <property type="term" value="C:nuclear cap binding complex"/>
    <property type="evidence" value="ECO:0000318"/>
    <property type="project" value="GO_Central"/>
</dbReference>
<dbReference type="GO" id="GO:0005634">
    <property type="term" value="C:nucleus"/>
    <property type="evidence" value="ECO:0007669"/>
    <property type="project" value="UniProtKB-SubCell"/>
</dbReference>
<dbReference type="GO" id="GO:0000339">
    <property type="term" value="F:RNA cap binding"/>
    <property type="evidence" value="ECO:0000318"/>
    <property type="project" value="GO_Central"/>
</dbReference>
<dbReference type="GO" id="GO:0045292">
    <property type="term" value="P:mRNA cis splicing, via spliceosome"/>
    <property type="evidence" value="ECO:0007669"/>
    <property type="project" value="InterPro"/>
</dbReference>
<dbReference type="GO" id="GO:0000398">
    <property type="term" value="P:mRNA splicing, via spliceosome"/>
    <property type="evidence" value="ECO:0000318"/>
    <property type="project" value="GO_Central"/>
</dbReference>
<dbReference type="GO" id="GO:0031047">
    <property type="term" value="P:regulatory ncRNA-mediated gene silencing"/>
    <property type="evidence" value="ECO:0007669"/>
    <property type="project" value="UniProtKB-KW"/>
</dbReference>
<dbReference type="CDD" id="cd12240">
    <property type="entry name" value="RRM_NCBP2"/>
    <property type="match status" value="1"/>
</dbReference>
<dbReference type="FunFam" id="3.30.70.330:FF:000128">
    <property type="entry name" value="Nuclear cap-binding protein subunit 2"/>
    <property type="match status" value="1"/>
</dbReference>
<dbReference type="Gene3D" id="3.30.70.330">
    <property type="match status" value="1"/>
</dbReference>
<dbReference type="InterPro" id="IPR027157">
    <property type="entry name" value="NCBP2"/>
</dbReference>
<dbReference type="InterPro" id="IPR034148">
    <property type="entry name" value="NCBP2_RRM"/>
</dbReference>
<dbReference type="InterPro" id="IPR012677">
    <property type="entry name" value="Nucleotide-bd_a/b_plait_sf"/>
</dbReference>
<dbReference type="InterPro" id="IPR035979">
    <property type="entry name" value="RBD_domain_sf"/>
</dbReference>
<dbReference type="InterPro" id="IPR000504">
    <property type="entry name" value="RRM_dom"/>
</dbReference>
<dbReference type="PANTHER" id="PTHR18847">
    <property type="entry name" value="20 KD NUCLEAR CAP BINDING PROTEIN"/>
    <property type="match status" value="1"/>
</dbReference>
<dbReference type="PANTHER" id="PTHR18847:SF0">
    <property type="entry name" value="NUCLEAR CAP-BINDING PROTEIN SUBUNIT 2"/>
    <property type="match status" value="1"/>
</dbReference>
<dbReference type="Pfam" id="PF00076">
    <property type="entry name" value="RRM_1"/>
    <property type="match status" value="1"/>
</dbReference>
<dbReference type="SMART" id="SM00360">
    <property type="entry name" value="RRM"/>
    <property type="match status" value="1"/>
</dbReference>
<dbReference type="SUPFAM" id="SSF54928">
    <property type="entry name" value="RNA-binding domain, RBD"/>
    <property type="match status" value="1"/>
</dbReference>
<dbReference type="PROSITE" id="PS50102">
    <property type="entry name" value="RRM"/>
    <property type="match status" value="1"/>
</dbReference>
<accession>A8Y1R8</accession>
<proteinExistence type="inferred from homology"/>
<sequence>MVFDPRTLDQPKDISAYRDQRYQGSVRDQELALRTSCTLYVGNLSYYTKEDQVYELFGRAGDVRRVIMGLDRFKKTPCGFCFVEYYTREDAELALQNISNTRMDDRVIRADWDAGFVEGRQYGRGKHGGQVRDEYRKDYDPERGGYNRAIAQKSMVE</sequence>
<keyword id="KW-0507">mRNA processing</keyword>
<keyword id="KW-0508">mRNA splicing</keyword>
<keyword id="KW-0539">Nucleus</keyword>
<keyword id="KW-1185">Reference proteome</keyword>
<keyword id="KW-0694">RNA-binding</keyword>
<keyword id="KW-0943">RNA-mediated gene silencing</keyword>
<protein>
    <recommendedName>
        <fullName>Nuclear cap-binding protein subunit 2</fullName>
    </recommendedName>
    <alternativeName>
        <fullName>20 kDa nuclear cap-binding protein</fullName>
    </alternativeName>
    <alternativeName>
        <fullName>NCBP 20 kDa subunit</fullName>
        <shortName>CBP20</shortName>
    </alternativeName>
</protein>
<comment type="function">
    <text evidence="1">Component of the cap-binding complex (CBC), which binds co-transcriptionally to the 5' cap of pre-mRNAs and is involved in various processes such as pre-mRNA splicing and RNA-mediated gene silencing (RNAi). The CBC complex is involved in miRNA-mediated RNA interference and is required for primary microRNAs (miRNAs) processing. In the CBC complex, ncbp-2 recognizes and binds capped RNAs (m7GpppG-capped RNA) but requires ncbp-1 to stabilize the movement of its N-terminal loop and lock the CBC into a high affinity cap-binding state with the cap structure (By similarity).</text>
</comment>
<comment type="subunit">
    <text evidence="1">Component of the nuclear cap-binding complex (CBC), a heterodimer composed of ncbp-1 and ncbp-2 that interacts with m7GpppG-capped RNA.</text>
</comment>
<comment type="subcellular location">
    <subcellularLocation>
        <location evidence="1">Nucleus</location>
    </subcellularLocation>
</comment>
<comment type="similarity">
    <text evidence="3">Belongs to the RRM NCBP2 family.</text>
</comment>
<organism>
    <name type="scientific">Caenorhabditis briggsae</name>
    <dbReference type="NCBI Taxonomy" id="6238"/>
    <lineage>
        <taxon>Eukaryota</taxon>
        <taxon>Metazoa</taxon>
        <taxon>Ecdysozoa</taxon>
        <taxon>Nematoda</taxon>
        <taxon>Chromadorea</taxon>
        <taxon>Rhabditida</taxon>
        <taxon>Rhabditina</taxon>
        <taxon>Rhabditomorpha</taxon>
        <taxon>Rhabditoidea</taxon>
        <taxon>Rhabditidae</taxon>
        <taxon>Peloderinae</taxon>
        <taxon>Caenorhabditis</taxon>
    </lineage>
</organism>